<keyword id="KW-0012">Acyltransferase</keyword>
<keyword id="KW-0677">Repeat</keyword>
<keyword id="KW-0808">Transferase</keyword>
<organism>
    <name type="scientific">Sanguibacter keddieii (strain ATCC 51767 / DSM 10542 / NCFB 3025 / ST-74)</name>
    <dbReference type="NCBI Taxonomy" id="446469"/>
    <lineage>
        <taxon>Bacteria</taxon>
        <taxon>Bacillati</taxon>
        <taxon>Actinomycetota</taxon>
        <taxon>Actinomycetes</taxon>
        <taxon>Micrococcales</taxon>
        <taxon>Sanguibacteraceae</taxon>
        <taxon>Sanguibacter</taxon>
    </lineage>
</organism>
<accession>D1BE23</accession>
<reference key="1">
    <citation type="journal article" date="2009" name="Stand. Genomic Sci.">
        <title>Complete genome sequence of Sanguibacter keddieii type strain (ST-74).</title>
        <authorList>
            <person name="Ivanova N."/>
            <person name="Sikorski J."/>
            <person name="Sims D."/>
            <person name="Brettin T."/>
            <person name="Detter J.C."/>
            <person name="Han C."/>
            <person name="Lapidus A."/>
            <person name="Copeland A."/>
            <person name="Glavina Del Rio T."/>
            <person name="Nolan M."/>
            <person name="Chen F."/>
            <person name="Lucas S."/>
            <person name="Tice H."/>
            <person name="Cheng J.F."/>
            <person name="Bruce D."/>
            <person name="Goodwin L."/>
            <person name="Pitluck S."/>
            <person name="Pati A."/>
            <person name="Mavromatis K."/>
            <person name="Chen A."/>
            <person name="Palaniappan K."/>
            <person name="D'haeseleer P."/>
            <person name="Chain P."/>
            <person name="Bristow J."/>
            <person name="Eisen J.A."/>
            <person name="Markowitz V."/>
            <person name="Hugenholtz P."/>
            <person name="Goker M."/>
            <person name="Pukall R."/>
            <person name="Klenk H.P."/>
            <person name="Kyrpides N.C."/>
        </authorList>
    </citation>
    <scope>NUCLEOTIDE SEQUENCE [LARGE SCALE GENOMIC DNA]</scope>
    <source>
        <strain>ATCC 51767 / DSM 10542 / NCFB 3025 / ST-74</strain>
    </source>
</reference>
<dbReference type="EC" id="2.3.1.189" evidence="1"/>
<dbReference type="EMBL" id="CP001819">
    <property type="protein sequence ID" value="ACZ23244.1"/>
    <property type="molecule type" value="Genomic_DNA"/>
</dbReference>
<dbReference type="RefSeq" id="WP_012868312.1">
    <property type="nucleotide sequence ID" value="NC_013521.1"/>
</dbReference>
<dbReference type="SMR" id="D1BE23"/>
<dbReference type="STRING" id="446469.Sked_33490"/>
<dbReference type="KEGG" id="ske:Sked_33490"/>
<dbReference type="eggNOG" id="COG0456">
    <property type="taxonomic scope" value="Bacteria"/>
</dbReference>
<dbReference type="HOGENOM" id="CLU_068014_0_0_11"/>
<dbReference type="Proteomes" id="UP000000322">
    <property type="component" value="Chromosome"/>
</dbReference>
<dbReference type="GO" id="GO:0035447">
    <property type="term" value="F:mycothiol synthase activity"/>
    <property type="evidence" value="ECO:0007669"/>
    <property type="project" value="UniProtKB-UniRule"/>
</dbReference>
<dbReference type="GO" id="GO:0010125">
    <property type="term" value="P:mycothiol biosynthetic process"/>
    <property type="evidence" value="ECO:0007669"/>
    <property type="project" value="UniProtKB-UniRule"/>
</dbReference>
<dbReference type="CDD" id="cd04301">
    <property type="entry name" value="NAT_SF"/>
    <property type="match status" value="2"/>
</dbReference>
<dbReference type="Gene3D" id="3.40.630.30">
    <property type="match status" value="1"/>
</dbReference>
<dbReference type="HAMAP" id="MF_01698">
    <property type="entry name" value="MshD"/>
    <property type="match status" value="1"/>
</dbReference>
<dbReference type="InterPro" id="IPR016181">
    <property type="entry name" value="Acyl_CoA_acyltransferase"/>
</dbReference>
<dbReference type="InterPro" id="IPR050832">
    <property type="entry name" value="Bact_Acetyltransf"/>
</dbReference>
<dbReference type="InterPro" id="IPR000182">
    <property type="entry name" value="GNAT_dom"/>
</dbReference>
<dbReference type="InterPro" id="IPR017813">
    <property type="entry name" value="Mycothiol_AcTrfase"/>
</dbReference>
<dbReference type="NCBIfam" id="TIGR03448">
    <property type="entry name" value="mycothiol_MshD"/>
    <property type="match status" value="1"/>
</dbReference>
<dbReference type="PANTHER" id="PTHR43877:SF2">
    <property type="entry name" value="AMINOALKYLPHOSPHONATE N-ACETYLTRANSFERASE-RELATED"/>
    <property type="match status" value="1"/>
</dbReference>
<dbReference type="PANTHER" id="PTHR43877">
    <property type="entry name" value="AMINOALKYLPHOSPHONATE N-ACETYLTRANSFERASE-RELATED-RELATED"/>
    <property type="match status" value="1"/>
</dbReference>
<dbReference type="Pfam" id="PF00583">
    <property type="entry name" value="Acetyltransf_1"/>
    <property type="match status" value="2"/>
</dbReference>
<dbReference type="PIRSF" id="PIRSF021524">
    <property type="entry name" value="MSH_acetyltransferase"/>
    <property type="match status" value="1"/>
</dbReference>
<dbReference type="SUPFAM" id="SSF55729">
    <property type="entry name" value="Acyl-CoA N-acyltransferases (Nat)"/>
    <property type="match status" value="1"/>
</dbReference>
<dbReference type="PROSITE" id="PS51186">
    <property type="entry name" value="GNAT"/>
    <property type="match status" value="2"/>
</dbReference>
<sequence>MDHSEIDVETSPLTAADAQAVHRLARAAEHVDQVAPLSEQPLLRLLDAEAPTTHLMVRAADDLAGYAQVDRGAPGTASAELVVHPFARHHGVGTALLEHALELMDAEGRVLSVWAHGDLPAARSLAARTGLVVVRELWKMHLPLDGSTSTPESAPAAPLAPGVSLRAFRPGEDDAAWLAVNARAFASHPEQGRLTQTDLAARVAEPWFDAGSFLLAERDGDLVGFCWLKVPADQPQDAPRVGEIYALGVDPSAQGLRLGTALTAAGLDRLREVGVEVVELYTEGDNTVAIRTYTAAGFTRATVDVQMARPSDATA</sequence>
<name>MSHD_SANKS</name>
<comment type="function">
    <text evidence="1">Catalyzes the transfer of acetyl from acetyl-CoA to desacetylmycothiol (Cys-GlcN-Ins) to form mycothiol.</text>
</comment>
<comment type="catalytic activity">
    <reaction evidence="1">
        <text>1D-myo-inositol 2-(L-cysteinylamino)-2-deoxy-alpha-D-glucopyranoside + acetyl-CoA = mycothiol + CoA + H(+)</text>
        <dbReference type="Rhea" id="RHEA:26172"/>
        <dbReference type="ChEBI" id="CHEBI:15378"/>
        <dbReference type="ChEBI" id="CHEBI:16768"/>
        <dbReference type="ChEBI" id="CHEBI:57287"/>
        <dbReference type="ChEBI" id="CHEBI:57288"/>
        <dbReference type="ChEBI" id="CHEBI:58887"/>
        <dbReference type="EC" id="2.3.1.189"/>
    </reaction>
</comment>
<comment type="subunit">
    <text evidence="1">Monomer.</text>
</comment>
<comment type="similarity">
    <text evidence="1">Belongs to the acetyltransferase family. MshD subfamily.</text>
</comment>
<feature type="chain" id="PRO_0000400298" description="Mycothiol acetyltransferase">
    <location>
        <begin position="1"/>
        <end position="315"/>
    </location>
</feature>
<feature type="domain" description="N-acetyltransferase 1" evidence="1">
    <location>
        <begin position="8"/>
        <end position="145"/>
    </location>
</feature>
<feature type="domain" description="N-acetyltransferase 2" evidence="1">
    <location>
        <begin position="163"/>
        <end position="315"/>
    </location>
</feature>
<feature type="binding site" evidence="1">
    <location>
        <position position="39"/>
    </location>
    <ligand>
        <name>1D-myo-inositol 2-(L-cysteinylamino)-2-deoxy-alpha-D-glucopyranoside</name>
        <dbReference type="ChEBI" id="CHEBI:58887"/>
    </ligand>
</feature>
<feature type="binding site" evidence="1">
    <location>
        <begin position="81"/>
        <end position="83"/>
    </location>
    <ligand>
        <name>acetyl-CoA</name>
        <dbReference type="ChEBI" id="CHEBI:57288"/>
        <label>1</label>
    </ligand>
</feature>
<feature type="binding site" evidence="1">
    <location>
        <begin position="89"/>
        <end position="94"/>
    </location>
    <ligand>
        <name>acetyl-CoA</name>
        <dbReference type="ChEBI" id="CHEBI:57288"/>
        <label>1</label>
    </ligand>
</feature>
<feature type="binding site" evidence="1">
    <location>
        <position position="190"/>
    </location>
    <ligand>
        <name>1D-myo-inositol 2-(L-cysteinylamino)-2-deoxy-alpha-D-glucopyranoside</name>
        <dbReference type="ChEBI" id="CHEBI:58887"/>
    </ligand>
</feature>
<feature type="binding site" evidence="1">
    <location>
        <position position="229"/>
    </location>
    <ligand>
        <name>1D-myo-inositol 2-(L-cysteinylamino)-2-deoxy-alpha-D-glucopyranoside</name>
        <dbReference type="ChEBI" id="CHEBI:58887"/>
    </ligand>
</feature>
<feature type="binding site" evidence="1">
    <location>
        <position position="243"/>
    </location>
    <ligand>
        <name>1D-myo-inositol 2-(L-cysteinylamino)-2-deoxy-alpha-D-glucopyranoside</name>
        <dbReference type="ChEBI" id="CHEBI:58887"/>
    </ligand>
</feature>
<feature type="binding site" evidence="1">
    <location>
        <begin position="247"/>
        <end position="249"/>
    </location>
    <ligand>
        <name>acetyl-CoA</name>
        <dbReference type="ChEBI" id="CHEBI:57288"/>
        <label>2</label>
    </ligand>
</feature>
<feature type="binding site" evidence="1">
    <location>
        <position position="281"/>
    </location>
    <ligand>
        <name>1D-myo-inositol 2-(L-cysteinylamino)-2-deoxy-alpha-D-glucopyranoside</name>
        <dbReference type="ChEBI" id="CHEBI:58887"/>
    </ligand>
</feature>
<feature type="binding site" evidence="1">
    <location>
        <begin position="286"/>
        <end position="291"/>
    </location>
    <ligand>
        <name>acetyl-CoA</name>
        <dbReference type="ChEBI" id="CHEBI:57288"/>
        <label>2</label>
    </ligand>
</feature>
<protein>
    <recommendedName>
        <fullName evidence="1">Mycothiol acetyltransferase</fullName>
        <shortName evidence="1">MSH acetyltransferase</shortName>
        <ecNumber evidence="1">2.3.1.189</ecNumber>
    </recommendedName>
    <alternativeName>
        <fullName evidence="1">Mycothiol synthase</fullName>
    </alternativeName>
</protein>
<proteinExistence type="inferred from homology"/>
<evidence type="ECO:0000255" key="1">
    <source>
        <dbReference type="HAMAP-Rule" id="MF_01698"/>
    </source>
</evidence>
<gene>
    <name evidence="1" type="primary">mshD</name>
    <name type="ordered locus">Sked_33490</name>
</gene>